<accession>A8G1W7</accession>
<feature type="chain" id="PRO_1000086897" description="ATP synthase subunit alpha">
    <location>
        <begin position="1"/>
        <end position="513"/>
    </location>
</feature>
<feature type="binding site" evidence="1">
    <location>
        <begin position="169"/>
        <end position="176"/>
    </location>
    <ligand>
        <name>ATP</name>
        <dbReference type="ChEBI" id="CHEBI:30616"/>
    </ligand>
</feature>
<feature type="site" description="Required for activity" evidence="1">
    <location>
        <position position="373"/>
    </location>
</feature>
<gene>
    <name evidence="1" type="primary">atpA</name>
    <name type="ordered locus">Ssed_4488</name>
</gene>
<evidence type="ECO:0000255" key="1">
    <source>
        <dbReference type="HAMAP-Rule" id="MF_01346"/>
    </source>
</evidence>
<dbReference type="EC" id="7.1.2.2" evidence="1"/>
<dbReference type="EMBL" id="CP000821">
    <property type="protein sequence ID" value="ABV39090.1"/>
    <property type="molecule type" value="Genomic_DNA"/>
</dbReference>
<dbReference type="RefSeq" id="WP_012144817.1">
    <property type="nucleotide sequence ID" value="NC_009831.1"/>
</dbReference>
<dbReference type="SMR" id="A8G1W7"/>
<dbReference type="STRING" id="425104.Ssed_4488"/>
<dbReference type="KEGG" id="sse:Ssed_4488"/>
<dbReference type="eggNOG" id="COG0056">
    <property type="taxonomic scope" value="Bacteria"/>
</dbReference>
<dbReference type="HOGENOM" id="CLU_010091_2_1_6"/>
<dbReference type="OrthoDB" id="9803053at2"/>
<dbReference type="Proteomes" id="UP000002015">
    <property type="component" value="Chromosome"/>
</dbReference>
<dbReference type="GO" id="GO:0005886">
    <property type="term" value="C:plasma membrane"/>
    <property type="evidence" value="ECO:0007669"/>
    <property type="project" value="UniProtKB-SubCell"/>
</dbReference>
<dbReference type="GO" id="GO:0045259">
    <property type="term" value="C:proton-transporting ATP synthase complex"/>
    <property type="evidence" value="ECO:0007669"/>
    <property type="project" value="UniProtKB-KW"/>
</dbReference>
<dbReference type="GO" id="GO:0043531">
    <property type="term" value="F:ADP binding"/>
    <property type="evidence" value="ECO:0007669"/>
    <property type="project" value="TreeGrafter"/>
</dbReference>
<dbReference type="GO" id="GO:0005524">
    <property type="term" value="F:ATP binding"/>
    <property type="evidence" value="ECO:0007669"/>
    <property type="project" value="UniProtKB-UniRule"/>
</dbReference>
<dbReference type="GO" id="GO:0046933">
    <property type="term" value="F:proton-transporting ATP synthase activity, rotational mechanism"/>
    <property type="evidence" value="ECO:0007669"/>
    <property type="project" value="UniProtKB-UniRule"/>
</dbReference>
<dbReference type="CDD" id="cd18113">
    <property type="entry name" value="ATP-synt_F1_alpha_C"/>
    <property type="match status" value="1"/>
</dbReference>
<dbReference type="CDD" id="cd18116">
    <property type="entry name" value="ATP-synt_F1_alpha_N"/>
    <property type="match status" value="1"/>
</dbReference>
<dbReference type="CDD" id="cd01132">
    <property type="entry name" value="F1-ATPase_alpha_CD"/>
    <property type="match status" value="1"/>
</dbReference>
<dbReference type="FunFam" id="1.20.150.20:FF:000001">
    <property type="entry name" value="ATP synthase subunit alpha"/>
    <property type="match status" value="1"/>
</dbReference>
<dbReference type="FunFam" id="2.40.30.20:FF:000001">
    <property type="entry name" value="ATP synthase subunit alpha"/>
    <property type="match status" value="1"/>
</dbReference>
<dbReference type="FunFam" id="3.40.50.300:FF:000002">
    <property type="entry name" value="ATP synthase subunit alpha"/>
    <property type="match status" value="1"/>
</dbReference>
<dbReference type="Gene3D" id="2.40.30.20">
    <property type="match status" value="1"/>
</dbReference>
<dbReference type="Gene3D" id="1.20.150.20">
    <property type="entry name" value="ATP synthase alpha/beta chain, C-terminal domain"/>
    <property type="match status" value="1"/>
</dbReference>
<dbReference type="Gene3D" id="3.40.50.300">
    <property type="entry name" value="P-loop containing nucleotide triphosphate hydrolases"/>
    <property type="match status" value="1"/>
</dbReference>
<dbReference type="HAMAP" id="MF_01346">
    <property type="entry name" value="ATP_synth_alpha_bact"/>
    <property type="match status" value="1"/>
</dbReference>
<dbReference type="InterPro" id="IPR023366">
    <property type="entry name" value="ATP_synth_asu-like_sf"/>
</dbReference>
<dbReference type="InterPro" id="IPR000793">
    <property type="entry name" value="ATP_synth_asu_C"/>
</dbReference>
<dbReference type="InterPro" id="IPR038376">
    <property type="entry name" value="ATP_synth_asu_C_sf"/>
</dbReference>
<dbReference type="InterPro" id="IPR033732">
    <property type="entry name" value="ATP_synth_F1_a_nt-bd_dom"/>
</dbReference>
<dbReference type="InterPro" id="IPR005294">
    <property type="entry name" value="ATP_synth_F1_asu"/>
</dbReference>
<dbReference type="InterPro" id="IPR020003">
    <property type="entry name" value="ATPase_a/bsu_AS"/>
</dbReference>
<dbReference type="InterPro" id="IPR004100">
    <property type="entry name" value="ATPase_F1/V1/A1_a/bsu_N"/>
</dbReference>
<dbReference type="InterPro" id="IPR036121">
    <property type="entry name" value="ATPase_F1/V1/A1_a/bsu_N_sf"/>
</dbReference>
<dbReference type="InterPro" id="IPR000194">
    <property type="entry name" value="ATPase_F1/V1/A1_a/bsu_nucl-bd"/>
</dbReference>
<dbReference type="InterPro" id="IPR027417">
    <property type="entry name" value="P-loop_NTPase"/>
</dbReference>
<dbReference type="NCBIfam" id="TIGR00962">
    <property type="entry name" value="atpA"/>
    <property type="match status" value="1"/>
</dbReference>
<dbReference type="NCBIfam" id="NF009884">
    <property type="entry name" value="PRK13343.1"/>
    <property type="match status" value="1"/>
</dbReference>
<dbReference type="PANTHER" id="PTHR48082">
    <property type="entry name" value="ATP SYNTHASE SUBUNIT ALPHA, MITOCHONDRIAL"/>
    <property type="match status" value="1"/>
</dbReference>
<dbReference type="PANTHER" id="PTHR48082:SF2">
    <property type="entry name" value="ATP SYNTHASE SUBUNIT ALPHA, MITOCHONDRIAL"/>
    <property type="match status" value="1"/>
</dbReference>
<dbReference type="Pfam" id="PF00006">
    <property type="entry name" value="ATP-synt_ab"/>
    <property type="match status" value="1"/>
</dbReference>
<dbReference type="Pfam" id="PF00306">
    <property type="entry name" value="ATP-synt_ab_C"/>
    <property type="match status" value="1"/>
</dbReference>
<dbReference type="Pfam" id="PF02874">
    <property type="entry name" value="ATP-synt_ab_N"/>
    <property type="match status" value="1"/>
</dbReference>
<dbReference type="SUPFAM" id="SSF47917">
    <property type="entry name" value="C-terminal domain of alpha and beta subunits of F1 ATP synthase"/>
    <property type="match status" value="1"/>
</dbReference>
<dbReference type="SUPFAM" id="SSF50615">
    <property type="entry name" value="N-terminal domain of alpha and beta subunits of F1 ATP synthase"/>
    <property type="match status" value="1"/>
</dbReference>
<dbReference type="SUPFAM" id="SSF52540">
    <property type="entry name" value="P-loop containing nucleoside triphosphate hydrolases"/>
    <property type="match status" value="1"/>
</dbReference>
<dbReference type="PROSITE" id="PS00152">
    <property type="entry name" value="ATPASE_ALPHA_BETA"/>
    <property type="match status" value="1"/>
</dbReference>
<name>ATPA_SHESH</name>
<comment type="function">
    <text evidence="1">Produces ATP from ADP in the presence of a proton gradient across the membrane. The alpha chain is a regulatory subunit.</text>
</comment>
<comment type="catalytic activity">
    <reaction evidence="1">
        <text>ATP + H2O + 4 H(+)(in) = ADP + phosphate + 5 H(+)(out)</text>
        <dbReference type="Rhea" id="RHEA:57720"/>
        <dbReference type="ChEBI" id="CHEBI:15377"/>
        <dbReference type="ChEBI" id="CHEBI:15378"/>
        <dbReference type="ChEBI" id="CHEBI:30616"/>
        <dbReference type="ChEBI" id="CHEBI:43474"/>
        <dbReference type="ChEBI" id="CHEBI:456216"/>
        <dbReference type="EC" id="7.1.2.2"/>
    </reaction>
</comment>
<comment type="subunit">
    <text evidence="1">F-type ATPases have 2 components, CF(1) - the catalytic core - and CF(0) - the membrane proton channel. CF(1) has five subunits: alpha(3), beta(3), gamma(1), delta(1), epsilon(1). CF(0) has three main subunits: a(1), b(2) and c(9-12). The alpha and beta chains form an alternating ring which encloses part of the gamma chain. CF(1) is attached to CF(0) by a central stalk formed by the gamma and epsilon chains, while a peripheral stalk is formed by the delta and b chains.</text>
</comment>
<comment type="subcellular location">
    <subcellularLocation>
        <location evidence="1">Cell inner membrane</location>
        <topology evidence="1">Peripheral membrane protein</topology>
    </subcellularLocation>
</comment>
<comment type="similarity">
    <text evidence="1">Belongs to the ATPase alpha/beta chains family.</text>
</comment>
<protein>
    <recommendedName>
        <fullName evidence="1">ATP synthase subunit alpha</fullName>
        <ecNumber evidence="1">7.1.2.2</ecNumber>
    </recommendedName>
    <alternativeName>
        <fullName evidence="1">ATP synthase F1 sector subunit alpha</fullName>
    </alternativeName>
    <alternativeName>
        <fullName evidence="1">F-ATPase subunit alpha</fullName>
    </alternativeName>
</protein>
<proteinExistence type="inferred from homology"/>
<organism>
    <name type="scientific">Shewanella sediminis (strain HAW-EB3)</name>
    <dbReference type="NCBI Taxonomy" id="425104"/>
    <lineage>
        <taxon>Bacteria</taxon>
        <taxon>Pseudomonadati</taxon>
        <taxon>Pseudomonadota</taxon>
        <taxon>Gammaproteobacteria</taxon>
        <taxon>Alteromonadales</taxon>
        <taxon>Shewanellaceae</taxon>
        <taxon>Shewanella</taxon>
    </lineage>
</organism>
<keyword id="KW-0066">ATP synthesis</keyword>
<keyword id="KW-0067">ATP-binding</keyword>
<keyword id="KW-0997">Cell inner membrane</keyword>
<keyword id="KW-1003">Cell membrane</keyword>
<keyword id="KW-0139">CF(1)</keyword>
<keyword id="KW-0375">Hydrogen ion transport</keyword>
<keyword id="KW-0406">Ion transport</keyword>
<keyword id="KW-0472">Membrane</keyword>
<keyword id="KW-0547">Nucleotide-binding</keyword>
<keyword id="KW-1185">Reference proteome</keyword>
<keyword id="KW-1278">Translocase</keyword>
<keyword id="KW-0813">Transport</keyword>
<sequence>MQLNSTEISDLIKQRIEQFEVVSETRNEGTIVAVSDGIIRIHGLADVMQGEMIELPGNRFAIALNLERDSVGAVVMGPYASLAEGDKVKTTGRILEVPVGNGLLGRVVNTLGEPIDGKGPIEHDGFSPVEVIAPGVIERKSVDQPVQTGYKAVDSMIPIGRGQRELIIGDRQIGKTALAIDAIINQKDSGIKCVYVAVGQKASTIANVVRKLDEHGALANTIVVVATASEAAALQYLAPYSGCSMGEYFRDRGEDSLIVYDDLSKQAVAYRQISLLLKRPPGREAYPGDVFYLHSRLLERASRVNAEYVEKFTKGEVKGRTGSLTALPIIETQAGDVSAFVPTNVISITDGQIFLETDLFNSGLRPAVNPGISVSRVGGAAQTKIIKKLSGGIRTALAQYRELAAFSQFASDLDDATRAQLEHGERVTELMKQKQYAPMSIADQSVSLFAAEKGYLKSIELAKIGDFEASLLSFMNSEHAELMKTINDTGSYNADIEGELKASLDKFVETQTW</sequence>
<reference key="1">
    <citation type="submission" date="2007-08" db="EMBL/GenBank/DDBJ databases">
        <title>Complete sequence of Shewanella sediminis HAW-EB3.</title>
        <authorList>
            <consortium name="US DOE Joint Genome Institute"/>
            <person name="Copeland A."/>
            <person name="Lucas S."/>
            <person name="Lapidus A."/>
            <person name="Barry K."/>
            <person name="Glavina del Rio T."/>
            <person name="Dalin E."/>
            <person name="Tice H."/>
            <person name="Pitluck S."/>
            <person name="Chertkov O."/>
            <person name="Brettin T."/>
            <person name="Bruce D."/>
            <person name="Detter J.C."/>
            <person name="Han C."/>
            <person name="Schmutz J."/>
            <person name="Larimer F."/>
            <person name="Land M."/>
            <person name="Hauser L."/>
            <person name="Kyrpides N."/>
            <person name="Kim E."/>
            <person name="Zhao J.-S."/>
            <person name="Richardson P."/>
        </authorList>
    </citation>
    <scope>NUCLEOTIDE SEQUENCE [LARGE SCALE GENOMIC DNA]</scope>
    <source>
        <strain>HAW-EB3</strain>
    </source>
</reference>